<proteinExistence type="inferred from homology"/>
<protein>
    <recommendedName>
        <fullName evidence="1">Pantothenate synthetase</fullName>
        <shortName evidence="1">PS</shortName>
        <ecNumber evidence="1">6.3.2.1</ecNumber>
    </recommendedName>
    <alternativeName>
        <fullName evidence="1">Pantoate--beta-alanine ligase</fullName>
    </alternativeName>
    <alternativeName>
        <fullName evidence="1">Pantoate-activating enzyme</fullName>
    </alternativeName>
</protein>
<dbReference type="EC" id="6.3.2.1" evidence="1"/>
<dbReference type="EMBL" id="CP000803">
    <property type="protein sequence ID" value="ABU61184.1"/>
    <property type="molecule type" value="Genomic_DNA"/>
</dbReference>
<dbReference type="RefSeq" id="WP_003018203.1">
    <property type="nucleotide sequence ID" value="NC_009749.1"/>
</dbReference>
<dbReference type="SMR" id="A7NB31"/>
<dbReference type="KEGG" id="fta:FTA_0708"/>
<dbReference type="HOGENOM" id="CLU_047148_0_2_6"/>
<dbReference type="UniPathway" id="UPA00028">
    <property type="reaction ID" value="UER00005"/>
</dbReference>
<dbReference type="GO" id="GO:0005829">
    <property type="term" value="C:cytosol"/>
    <property type="evidence" value="ECO:0007669"/>
    <property type="project" value="TreeGrafter"/>
</dbReference>
<dbReference type="GO" id="GO:0005524">
    <property type="term" value="F:ATP binding"/>
    <property type="evidence" value="ECO:0007669"/>
    <property type="project" value="UniProtKB-KW"/>
</dbReference>
<dbReference type="GO" id="GO:0004592">
    <property type="term" value="F:pantoate-beta-alanine ligase activity"/>
    <property type="evidence" value="ECO:0007669"/>
    <property type="project" value="UniProtKB-UniRule"/>
</dbReference>
<dbReference type="GO" id="GO:0015940">
    <property type="term" value="P:pantothenate biosynthetic process"/>
    <property type="evidence" value="ECO:0007669"/>
    <property type="project" value="UniProtKB-UniRule"/>
</dbReference>
<dbReference type="Gene3D" id="3.40.50.620">
    <property type="entry name" value="HUPs"/>
    <property type="match status" value="1"/>
</dbReference>
<dbReference type="Gene3D" id="3.30.1300.10">
    <property type="entry name" value="Pantoate-beta-alanine ligase, C-terminal domain"/>
    <property type="match status" value="1"/>
</dbReference>
<dbReference type="HAMAP" id="MF_00158">
    <property type="entry name" value="PanC"/>
    <property type="match status" value="1"/>
</dbReference>
<dbReference type="InterPro" id="IPR004821">
    <property type="entry name" value="Cyt_trans-like"/>
</dbReference>
<dbReference type="InterPro" id="IPR003721">
    <property type="entry name" value="Pantoate_ligase"/>
</dbReference>
<dbReference type="InterPro" id="IPR042176">
    <property type="entry name" value="Pantoate_ligase_C"/>
</dbReference>
<dbReference type="InterPro" id="IPR014729">
    <property type="entry name" value="Rossmann-like_a/b/a_fold"/>
</dbReference>
<dbReference type="NCBIfam" id="TIGR00125">
    <property type="entry name" value="cyt_tran_rel"/>
    <property type="match status" value="1"/>
</dbReference>
<dbReference type="NCBIfam" id="TIGR00018">
    <property type="entry name" value="panC"/>
    <property type="match status" value="1"/>
</dbReference>
<dbReference type="PANTHER" id="PTHR21299">
    <property type="entry name" value="CYTIDYLATE KINASE/PANTOATE-BETA-ALANINE LIGASE"/>
    <property type="match status" value="1"/>
</dbReference>
<dbReference type="PANTHER" id="PTHR21299:SF1">
    <property type="entry name" value="PANTOATE--BETA-ALANINE LIGASE"/>
    <property type="match status" value="1"/>
</dbReference>
<dbReference type="Pfam" id="PF02569">
    <property type="entry name" value="Pantoate_ligase"/>
    <property type="match status" value="1"/>
</dbReference>
<dbReference type="SUPFAM" id="SSF52374">
    <property type="entry name" value="Nucleotidylyl transferase"/>
    <property type="match status" value="1"/>
</dbReference>
<keyword id="KW-0067">ATP-binding</keyword>
<keyword id="KW-0963">Cytoplasm</keyword>
<keyword id="KW-0436">Ligase</keyword>
<keyword id="KW-0547">Nucleotide-binding</keyword>
<keyword id="KW-0566">Pantothenate biosynthesis</keyword>
<name>PANC_FRATF</name>
<comment type="function">
    <text evidence="1">Catalyzes the condensation of pantoate with beta-alanine in an ATP-dependent reaction via a pantoyl-adenylate intermediate.</text>
</comment>
<comment type="catalytic activity">
    <reaction evidence="1">
        <text>(R)-pantoate + beta-alanine + ATP = (R)-pantothenate + AMP + diphosphate + H(+)</text>
        <dbReference type="Rhea" id="RHEA:10912"/>
        <dbReference type="ChEBI" id="CHEBI:15378"/>
        <dbReference type="ChEBI" id="CHEBI:15980"/>
        <dbReference type="ChEBI" id="CHEBI:29032"/>
        <dbReference type="ChEBI" id="CHEBI:30616"/>
        <dbReference type="ChEBI" id="CHEBI:33019"/>
        <dbReference type="ChEBI" id="CHEBI:57966"/>
        <dbReference type="ChEBI" id="CHEBI:456215"/>
        <dbReference type="EC" id="6.3.2.1"/>
    </reaction>
</comment>
<comment type="pathway">
    <text evidence="1">Cofactor biosynthesis; (R)-pantothenate biosynthesis; (R)-pantothenate from (R)-pantoate and beta-alanine: step 1/1.</text>
</comment>
<comment type="subunit">
    <text evidence="1">Homodimer.</text>
</comment>
<comment type="subcellular location">
    <subcellularLocation>
        <location evidence="1">Cytoplasm</location>
    </subcellularLocation>
</comment>
<comment type="miscellaneous">
    <text evidence="1">The reaction proceeds by a bi uni uni bi ping pong mechanism.</text>
</comment>
<comment type="similarity">
    <text evidence="1">Belongs to the pantothenate synthetase family.</text>
</comment>
<evidence type="ECO:0000255" key="1">
    <source>
        <dbReference type="HAMAP-Rule" id="MF_00158"/>
    </source>
</evidence>
<organism>
    <name type="scientific">Francisella tularensis subsp. holarctica (strain FTNF002-00 / FTA)</name>
    <dbReference type="NCBI Taxonomy" id="458234"/>
    <lineage>
        <taxon>Bacteria</taxon>
        <taxon>Pseudomonadati</taxon>
        <taxon>Pseudomonadota</taxon>
        <taxon>Gammaproteobacteria</taxon>
        <taxon>Thiotrichales</taxon>
        <taxon>Francisellaceae</taxon>
        <taxon>Francisella</taxon>
    </lineage>
</organism>
<accession>A7NB31</accession>
<feature type="chain" id="PRO_1000011430" description="Pantothenate synthetase">
    <location>
        <begin position="1"/>
        <end position="261"/>
    </location>
</feature>
<feature type="active site" description="Proton donor" evidence="1">
    <location>
        <position position="36"/>
    </location>
</feature>
<feature type="binding site" evidence="1">
    <location>
        <begin position="29"/>
        <end position="36"/>
    </location>
    <ligand>
        <name>ATP</name>
        <dbReference type="ChEBI" id="CHEBI:30616"/>
    </ligand>
</feature>
<feature type="binding site" evidence="1">
    <location>
        <position position="60"/>
    </location>
    <ligand>
        <name>(R)-pantoate</name>
        <dbReference type="ChEBI" id="CHEBI:15980"/>
    </ligand>
</feature>
<feature type="binding site" evidence="1">
    <location>
        <position position="60"/>
    </location>
    <ligand>
        <name>beta-alanine</name>
        <dbReference type="ChEBI" id="CHEBI:57966"/>
    </ligand>
</feature>
<feature type="binding site" evidence="1">
    <location>
        <begin position="147"/>
        <end position="150"/>
    </location>
    <ligand>
        <name>ATP</name>
        <dbReference type="ChEBI" id="CHEBI:30616"/>
    </ligand>
</feature>
<feature type="binding site" evidence="1">
    <location>
        <position position="153"/>
    </location>
    <ligand>
        <name>(R)-pantoate</name>
        <dbReference type="ChEBI" id="CHEBI:15980"/>
    </ligand>
</feature>
<feature type="binding site" evidence="1">
    <location>
        <begin position="184"/>
        <end position="187"/>
    </location>
    <ligand>
        <name>ATP</name>
        <dbReference type="ChEBI" id="CHEBI:30616"/>
    </ligand>
</feature>
<sequence>MIIADNIKQFHSIRNSLIKQQKIGFVPTMGALHNGHISLIKKAKSENDVVIVSIFVNPTQFNNPNDYQTYPNQLQQDIQILASLDVDVLFNPSEKDIYPDGNLLRIEPKLEIANILEGKSRPGHFSGTLTVVLKLLQITKPNNLYLGEKDYQQVMLIKQLVKDFFINTKIIVCPTQRQPSGLPLSSRNKNLTSTDIEIANKIYEILRQDDFSNLEELTNKINSTGAKLQYIQKLNNRIFLAFYIGKVRLIDNFLKETGPSC</sequence>
<reference key="1">
    <citation type="journal article" date="2009" name="PLoS ONE">
        <title>Complete genome sequence of Francisella tularensis subspecies holarctica FTNF002-00.</title>
        <authorList>
            <person name="Barabote R.D."/>
            <person name="Xie G."/>
            <person name="Brettin T.S."/>
            <person name="Hinrichs S.H."/>
            <person name="Fey P.D."/>
            <person name="Jay J.J."/>
            <person name="Engle J.L."/>
            <person name="Godbole S.D."/>
            <person name="Noronha J.M."/>
            <person name="Scheuermann R.H."/>
            <person name="Zhou L.W."/>
            <person name="Lion C."/>
            <person name="Dempsey M.P."/>
        </authorList>
    </citation>
    <scope>NUCLEOTIDE SEQUENCE [LARGE SCALE GENOMIC DNA]</scope>
    <source>
        <strain>FTNF002-00 / FTA</strain>
    </source>
</reference>
<gene>
    <name evidence="1" type="primary">panC</name>
    <name type="ordered locus">FTA_0708</name>
</gene>